<keyword id="KW-0028">Amino-acid biosynthesis</keyword>
<keyword id="KW-0368">Histidine biosynthesis</keyword>
<keyword id="KW-0378">Hydrolase</keyword>
<keyword id="KW-0486">Methionine biosynthesis</keyword>
<keyword id="KW-0511">Multifunctional enzyme</keyword>
<keyword id="KW-0521">NADP</keyword>
<keyword id="KW-0554">One-carbon metabolism</keyword>
<keyword id="KW-0560">Oxidoreductase</keyword>
<keyword id="KW-0658">Purine biosynthesis</keyword>
<name>FOLD_BURCM</name>
<evidence type="ECO:0000255" key="1">
    <source>
        <dbReference type="HAMAP-Rule" id="MF_01576"/>
    </source>
</evidence>
<organism>
    <name type="scientific">Burkholderia ambifaria (strain ATCC BAA-244 / DSM 16087 / CCUG 44356 / LMG 19182 / AMMD)</name>
    <name type="common">Burkholderia cepacia (strain AMMD)</name>
    <dbReference type="NCBI Taxonomy" id="339670"/>
    <lineage>
        <taxon>Bacteria</taxon>
        <taxon>Pseudomonadati</taxon>
        <taxon>Pseudomonadota</taxon>
        <taxon>Betaproteobacteria</taxon>
        <taxon>Burkholderiales</taxon>
        <taxon>Burkholderiaceae</taxon>
        <taxon>Burkholderia</taxon>
        <taxon>Burkholderia cepacia complex</taxon>
    </lineage>
</organism>
<dbReference type="EC" id="1.5.1.5" evidence="1"/>
<dbReference type="EC" id="3.5.4.9" evidence="1"/>
<dbReference type="EMBL" id="CP000440">
    <property type="protein sequence ID" value="ABI87733.1"/>
    <property type="molecule type" value="Genomic_DNA"/>
</dbReference>
<dbReference type="RefSeq" id="WP_011657390.1">
    <property type="nucleotide sequence ID" value="NC_008390.1"/>
</dbReference>
<dbReference type="SMR" id="Q0BDP0"/>
<dbReference type="GeneID" id="93085620"/>
<dbReference type="KEGG" id="bam:Bamb_2177"/>
<dbReference type="PATRIC" id="fig|339670.21.peg.2758"/>
<dbReference type="eggNOG" id="COG0190">
    <property type="taxonomic scope" value="Bacteria"/>
</dbReference>
<dbReference type="UniPathway" id="UPA00193"/>
<dbReference type="Proteomes" id="UP000000662">
    <property type="component" value="Chromosome 1"/>
</dbReference>
<dbReference type="GO" id="GO:0005829">
    <property type="term" value="C:cytosol"/>
    <property type="evidence" value="ECO:0007669"/>
    <property type="project" value="TreeGrafter"/>
</dbReference>
<dbReference type="GO" id="GO:0004477">
    <property type="term" value="F:methenyltetrahydrofolate cyclohydrolase activity"/>
    <property type="evidence" value="ECO:0007669"/>
    <property type="project" value="UniProtKB-UniRule"/>
</dbReference>
<dbReference type="GO" id="GO:0004488">
    <property type="term" value="F:methylenetetrahydrofolate dehydrogenase (NADP+) activity"/>
    <property type="evidence" value="ECO:0007669"/>
    <property type="project" value="UniProtKB-UniRule"/>
</dbReference>
<dbReference type="GO" id="GO:0000105">
    <property type="term" value="P:L-histidine biosynthetic process"/>
    <property type="evidence" value="ECO:0007669"/>
    <property type="project" value="UniProtKB-KW"/>
</dbReference>
<dbReference type="GO" id="GO:0009086">
    <property type="term" value="P:methionine biosynthetic process"/>
    <property type="evidence" value="ECO:0007669"/>
    <property type="project" value="UniProtKB-KW"/>
</dbReference>
<dbReference type="GO" id="GO:0006164">
    <property type="term" value="P:purine nucleotide biosynthetic process"/>
    <property type="evidence" value="ECO:0007669"/>
    <property type="project" value="UniProtKB-KW"/>
</dbReference>
<dbReference type="GO" id="GO:0035999">
    <property type="term" value="P:tetrahydrofolate interconversion"/>
    <property type="evidence" value="ECO:0007669"/>
    <property type="project" value="UniProtKB-UniRule"/>
</dbReference>
<dbReference type="CDD" id="cd01080">
    <property type="entry name" value="NAD_bind_m-THF_DH_Cyclohyd"/>
    <property type="match status" value="1"/>
</dbReference>
<dbReference type="FunFam" id="3.40.50.720:FF:000094">
    <property type="entry name" value="Bifunctional protein FolD"/>
    <property type="match status" value="1"/>
</dbReference>
<dbReference type="FunFam" id="3.40.50.10860:FF:000005">
    <property type="entry name" value="C-1-tetrahydrofolate synthase, cytoplasmic, putative"/>
    <property type="match status" value="1"/>
</dbReference>
<dbReference type="Gene3D" id="3.40.50.10860">
    <property type="entry name" value="Leucine Dehydrogenase, chain A, domain 1"/>
    <property type="match status" value="1"/>
</dbReference>
<dbReference type="Gene3D" id="3.40.50.720">
    <property type="entry name" value="NAD(P)-binding Rossmann-like Domain"/>
    <property type="match status" value="1"/>
</dbReference>
<dbReference type="HAMAP" id="MF_01576">
    <property type="entry name" value="THF_DHG_CYH"/>
    <property type="match status" value="1"/>
</dbReference>
<dbReference type="InterPro" id="IPR046346">
    <property type="entry name" value="Aminoacid_DH-like_N_sf"/>
</dbReference>
<dbReference type="InterPro" id="IPR036291">
    <property type="entry name" value="NAD(P)-bd_dom_sf"/>
</dbReference>
<dbReference type="InterPro" id="IPR000672">
    <property type="entry name" value="THF_DH/CycHdrlase"/>
</dbReference>
<dbReference type="InterPro" id="IPR020630">
    <property type="entry name" value="THF_DH/CycHdrlase_cat_dom"/>
</dbReference>
<dbReference type="InterPro" id="IPR020867">
    <property type="entry name" value="THF_DH/CycHdrlase_CS"/>
</dbReference>
<dbReference type="InterPro" id="IPR020631">
    <property type="entry name" value="THF_DH/CycHdrlase_NAD-bd_dom"/>
</dbReference>
<dbReference type="NCBIfam" id="NF008058">
    <property type="entry name" value="PRK10792.1"/>
    <property type="match status" value="1"/>
</dbReference>
<dbReference type="NCBIfam" id="NF010783">
    <property type="entry name" value="PRK14186.1"/>
    <property type="match status" value="1"/>
</dbReference>
<dbReference type="NCBIfam" id="NF010786">
    <property type="entry name" value="PRK14189.1"/>
    <property type="match status" value="1"/>
</dbReference>
<dbReference type="PANTHER" id="PTHR48099:SF5">
    <property type="entry name" value="C-1-TETRAHYDROFOLATE SYNTHASE, CYTOPLASMIC"/>
    <property type="match status" value="1"/>
</dbReference>
<dbReference type="PANTHER" id="PTHR48099">
    <property type="entry name" value="C-1-TETRAHYDROFOLATE SYNTHASE, CYTOPLASMIC-RELATED"/>
    <property type="match status" value="1"/>
</dbReference>
<dbReference type="Pfam" id="PF00763">
    <property type="entry name" value="THF_DHG_CYH"/>
    <property type="match status" value="1"/>
</dbReference>
<dbReference type="Pfam" id="PF02882">
    <property type="entry name" value="THF_DHG_CYH_C"/>
    <property type="match status" value="1"/>
</dbReference>
<dbReference type="PRINTS" id="PR00085">
    <property type="entry name" value="THFDHDRGNASE"/>
</dbReference>
<dbReference type="SUPFAM" id="SSF53223">
    <property type="entry name" value="Aminoacid dehydrogenase-like, N-terminal domain"/>
    <property type="match status" value="1"/>
</dbReference>
<dbReference type="SUPFAM" id="SSF51735">
    <property type="entry name" value="NAD(P)-binding Rossmann-fold domains"/>
    <property type="match status" value="1"/>
</dbReference>
<dbReference type="PROSITE" id="PS00766">
    <property type="entry name" value="THF_DHG_CYH_1"/>
    <property type="match status" value="1"/>
</dbReference>
<dbReference type="PROSITE" id="PS00767">
    <property type="entry name" value="THF_DHG_CYH_2"/>
    <property type="match status" value="1"/>
</dbReference>
<proteinExistence type="inferred from homology"/>
<comment type="function">
    <text evidence="1">Catalyzes the oxidation of 5,10-methylenetetrahydrofolate to 5,10-methenyltetrahydrofolate and then the hydrolysis of 5,10-methenyltetrahydrofolate to 10-formyltetrahydrofolate.</text>
</comment>
<comment type="catalytic activity">
    <reaction evidence="1">
        <text>(6R)-5,10-methylene-5,6,7,8-tetrahydrofolate + NADP(+) = (6R)-5,10-methenyltetrahydrofolate + NADPH</text>
        <dbReference type="Rhea" id="RHEA:22812"/>
        <dbReference type="ChEBI" id="CHEBI:15636"/>
        <dbReference type="ChEBI" id="CHEBI:57455"/>
        <dbReference type="ChEBI" id="CHEBI:57783"/>
        <dbReference type="ChEBI" id="CHEBI:58349"/>
        <dbReference type="EC" id="1.5.1.5"/>
    </reaction>
</comment>
<comment type="catalytic activity">
    <reaction evidence="1">
        <text>(6R)-5,10-methenyltetrahydrofolate + H2O = (6R)-10-formyltetrahydrofolate + H(+)</text>
        <dbReference type="Rhea" id="RHEA:23700"/>
        <dbReference type="ChEBI" id="CHEBI:15377"/>
        <dbReference type="ChEBI" id="CHEBI:15378"/>
        <dbReference type="ChEBI" id="CHEBI:57455"/>
        <dbReference type="ChEBI" id="CHEBI:195366"/>
        <dbReference type="EC" id="3.5.4.9"/>
    </reaction>
</comment>
<comment type="pathway">
    <text evidence="1">One-carbon metabolism; tetrahydrofolate interconversion.</text>
</comment>
<comment type="subunit">
    <text evidence="1">Homodimer.</text>
</comment>
<comment type="similarity">
    <text evidence="1">Belongs to the tetrahydrofolate dehydrogenase/cyclohydrolase family.</text>
</comment>
<accession>Q0BDP0</accession>
<sequence length="285" mass="29925">MTALLIDGNALSKTLRTQAAQRAAALTARGHQPGLAVVLVGANPASEVYVRNKIKACEDNGFFSHKDAYPDTLSEADLLARIDELNRDPKIHGILVQLPLPAHIDSHKVLEAIAPEKDVDGFHVANAGALMTGKPLFRPCTPYGVMKMFEAHDIPLQGANAVVIGRSNIVGKPMAMMLLEAGATVTICHSKTRDLAAHTRQADIVVAAVGKRNILTADMVKPGATVIDVGMNRDDAGKLCGDVDFAGVKEVAGHITPVPGGVGPMTITMLLINTIEAAERAAAAA</sequence>
<reference key="1">
    <citation type="submission" date="2006-08" db="EMBL/GenBank/DDBJ databases">
        <title>Complete sequence of chromosome 1 of Burkholderia cepacia AMMD.</title>
        <authorList>
            <person name="Copeland A."/>
            <person name="Lucas S."/>
            <person name="Lapidus A."/>
            <person name="Barry K."/>
            <person name="Detter J.C."/>
            <person name="Glavina del Rio T."/>
            <person name="Hammon N."/>
            <person name="Israni S."/>
            <person name="Pitluck S."/>
            <person name="Bruce D."/>
            <person name="Chain P."/>
            <person name="Malfatti S."/>
            <person name="Shin M."/>
            <person name="Vergez L."/>
            <person name="Schmutz J."/>
            <person name="Larimer F."/>
            <person name="Land M."/>
            <person name="Hauser L."/>
            <person name="Kyrpides N."/>
            <person name="Kim E."/>
            <person name="Parke J."/>
            <person name="Coenye T."/>
            <person name="Konstantinidis K."/>
            <person name="Ramette A."/>
            <person name="Tiedje J."/>
            <person name="Richardson P."/>
        </authorList>
    </citation>
    <scope>NUCLEOTIDE SEQUENCE [LARGE SCALE GENOMIC DNA]</scope>
    <source>
        <strain>ATCC BAA-244 / DSM 16087 / CCUG 44356 / LMG 19182 / AMMD</strain>
    </source>
</reference>
<protein>
    <recommendedName>
        <fullName evidence="1">Bifunctional protein FolD</fullName>
    </recommendedName>
    <domain>
        <recommendedName>
            <fullName evidence="1">Methylenetetrahydrofolate dehydrogenase</fullName>
            <ecNumber evidence="1">1.5.1.5</ecNumber>
        </recommendedName>
    </domain>
    <domain>
        <recommendedName>
            <fullName evidence="1">Methenyltetrahydrofolate cyclohydrolase</fullName>
            <ecNumber evidence="1">3.5.4.9</ecNumber>
        </recommendedName>
    </domain>
</protein>
<gene>
    <name evidence="1" type="primary">folD</name>
    <name type="ordered locus">Bamb_2177</name>
</gene>
<feature type="chain" id="PRO_0000305803" description="Bifunctional protein FolD">
    <location>
        <begin position="1"/>
        <end position="285"/>
    </location>
</feature>
<feature type="binding site" evidence="1">
    <location>
        <begin position="165"/>
        <end position="167"/>
    </location>
    <ligand>
        <name>NADP(+)</name>
        <dbReference type="ChEBI" id="CHEBI:58349"/>
    </ligand>
</feature>
<feature type="binding site" evidence="1">
    <location>
        <position position="190"/>
    </location>
    <ligand>
        <name>NADP(+)</name>
        <dbReference type="ChEBI" id="CHEBI:58349"/>
    </ligand>
</feature>